<name>GSA_SACI4</name>
<reference key="1">
    <citation type="journal article" date="2009" name="Proc. Natl. Acad. Sci. U.S.A.">
        <title>Biogeography of the Sulfolobus islandicus pan-genome.</title>
        <authorList>
            <person name="Reno M.L."/>
            <person name="Held N.L."/>
            <person name="Fields C.J."/>
            <person name="Burke P.V."/>
            <person name="Whitaker R.J."/>
        </authorList>
    </citation>
    <scope>NUCLEOTIDE SEQUENCE [LARGE SCALE GENOMIC DNA]</scope>
    <source>
        <strain>M.14.25 / Kamchatka #1</strain>
    </source>
</reference>
<keyword id="KW-0963">Cytoplasm</keyword>
<keyword id="KW-0413">Isomerase</keyword>
<keyword id="KW-0627">Porphyrin biosynthesis</keyword>
<keyword id="KW-0663">Pyridoxal phosphate</keyword>
<organism>
    <name type="scientific">Saccharolobus islandicus (strain M.14.25 / Kamchatka #1)</name>
    <name type="common">Sulfolobus islandicus</name>
    <dbReference type="NCBI Taxonomy" id="427317"/>
    <lineage>
        <taxon>Archaea</taxon>
        <taxon>Thermoproteota</taxon>
        <taxon>Thermoprotei</taxon>
        <taxon>Sulfolobales</taxon>
        <taxon>Sulfolobaceae</taxon>
        <taxon>Saccharolobus</taxon>
    </lineage>
</organism>
<evidence type="ECO:0000255" key="1">
    <source>
        <dbReference type="HAMAP-Rule" id="MF_00375"/>
    </source>
</evidence>
<sequence>MDKGRCTILNSEELWAQARQLFAGGVNSPVRAAVKPFPFYVERGKGAYIYTVEGNKFIDYVLGYGPLILGHSPESVKRKIIEQLEKGWLFGTPSKLEIELAKKISSHIPSAQKIRFVNSGTEATMAAIRLARGYSKRSKILKFSGNYHGAHDYTLVEAGSAATEYNVTTSDGIPMEIMKTIEICEFNDLDCVDKKLRNEDIAAALLEPIMGNAGVILPEKGFLSGLRELTKSYNSLLIFDEVITGFRIDIGGAQSYYQIYPDITTLGKIIGGGFPIGAVAGKAEIIDNFTPAGRVFNAGTFNANPISMIAGIATIEELEKEYPYNIANKASKTLVEELERLLKIKHTINHIGSMFQVFFGIDKVRNYSDAKRANKEYYIKFHERLLKERVFIPPSQYETIFTSAAHEDDVVNDTIDKLAKVIGELS</sequence>
<proteinExistence type="inferred from homology"/>
<gene>
    <name evidence="1" type="primary">hemL</name>
    <name type="ordered locus">M1425_1953</name>
</gene>
<feature type="chain" id="PRO_0000382414" description="Glutamate-1-semialdehyde 2,1-aminomutase">
    <location>
        <begin position="1"/>
        <end position="426"/>
    </location>
</feature>
<feature type="modified residue" description="N6-(pyridoxal phosphate)lysine" evidence="1">
    <location>
        <position position="268"/>
    </location>
</feature>
<dbReference type="EC" id="5.4.3.8" evidence="1"/>
<dbReference type="EMBL" id="CP001400">
    <property type="protein sequence ID" value="ACP38697.1"/>
    <property type="molecule type" value="Genomic_DNA"/>
</dbReference>
<dbReference type="RefSeq" id="WP_012711924.1">
    <property type="nucleotide sequence ID" value="NC_012588.1"/>
</dbReference>
<dbReference type="SMR" id="C3MYE0"/>
<dbReference type="GeneID" id="84059307"/>
<dbReference type="KEGG" id="sia:M1425_1953"/>
<dbReference type="HOGENOM" id="CLU_016922_1_5_2"/>
<dbReference type="UniPathway" id="UPA00251">
    <property type="reaction ID" value="UER00317"/>
</dbReference>
<dbReference type="Proteomes" id="UP000001350">
    <property type="component" value="Chromosome"/>
</dbReference>
<dbReference type="GO" id="GO:0005737">
    <property type="term" value="C:cytoplasm"/>
    <property type="evidence" value="ECO:0007669"/>
    <property type="project" value="UniProtKB-SubCell"/>
</dbReference>
<dbReference type="GO" id="GO:0042286">
    <property type="term" value="F:glutamate-1-semialdehyde 2,1-aminomutase activity"/>
    <property type="evidence" value="ECO:0007669"/>
    <property type="project" value="UniProtKB-UniRule"/>
</dbReference>
<dbReference type="GO" id="GO:0030170">
    <property type="term" value="F:pyridoxal phosphate binding"/>
    <property type="evidence" value="ECO:0007669"/>
    <property type="project" value="InterPro"/>
</dbReference>
<dbReference type="GO" id="GO:0008483">
    <property type="term" value="F:transaminase activity"/>
    <property type="evidence" value="ECO:0007669"/>
    <property type="project" value="InterPro"/>
</dbReference>
<dbReference type="GO" id="GO:0006782">
    <property type="term" value="P:protoporphyrinogen IX biosynthetic process"/>
    <property type="evidence" value="ECO:0007669"/>
    <property type="project" value="UniProtKB-UniRule"/>
</dbReference>
<dbReference type="CDD" id="cd00610">
    <property type="entry name" value="OAT_like"/>
    <property type="match status" value="1"/>
</dbReference>
<dbReference type="FunFam" id="3.40.640.10:FF:000021">
    <property type="entry name" value="Glutamate-1-semialdehyde 2,1-aminomutase"/>
    <property type="match status" value="1"/>
</dbReference>
<dbReference type="Gene3D" id="3.90.1150.10">
    <property type="entry name" value="Aspartate Aminotransferase, domain 1"/>
    <property type="match status" value="1"/>
</dbReference>
<dbReference type="Gene3D" id="3.40.640.10">
    <property type="entry name" value="Type I PLP-dependent aspartate aminotransferase-like (Major domain)"/>
    <property type="match status" value="1"/>
</dbReference>
<dbReference type="HAMAP" id="MF_00375">
    <property type="entry name" value="HemL_aminotrans_3"/>
    <property type="match status" value="1"/>
</dbReference>
<dbReference type="InterPro" id="IPR004639">
    <property type="entry name" value="4pyrrol_synth_GluAld_NH2Trfase"/>
</dbReference>
<dbReference type="InterPro" id="IPR005814">
    <property type="entry name" value="Aminotrans_3"/>
</dbReference>
<dbReference type="InterPro" id="IPR049704">
    <property type="entry name" value="Aminotrans_3_PPA_site"/>
</dbReference>
<dbReference type="InterPro" id="IPR015424">
    <property type="entry name" value="PyrdxlP-dep_Trfase"/>
</dbReference>
<dbReference type="InterPro" id="IPR015421">
    <property type="entry name" value="PyrdxlP-dep_Trfase_major"/>
</dbReference>
<dbReference type="InterPro" id="IPR015422">
    <property type="entry name" value="PyrdxlP-dep_Trfase_small"/>
</dbReference>
<dbReference type="NCBIfam" id="TIGR00713">
    <property type="entry name" value="hemL"/>
    <property type="match status" value="1"/>
</dbReference>
<dbReference type="NCBIfam" id="NF000818">
    <property type="entry name" value="PRK00062.1"/>
    <property type="match status" value="1"/>
</dbReference>
<dbReference type="PANTHER" id="PTHR43713">
    <property type="entry name" value="GLUTAMATE-1-SEMIALDEHYDE 2,1-AMINOMUTASE"/>
    <property type="match status" value="1"/>
</dbReference>
<dbReference type="PANTHER" id="PTHR43713:SF3">
    <property type="entry name" value="GLUTAMATE-1-SEMIALDEHYDE 2,1-AMINOMUTASE 1, CHLOROPLASTIC-RELATED"/>
    <property type="match status" value="1"/>
</dbReference>
<dbReference type="Pfam" id="PF00202">
    <property type="entry name" value="Aminotran_3"/>
    <property type="match status" value="1"/>
</dbReference>
<dbReference type="SUPFAM" id="SSF53383">
    <property type="entry name" value="PLP-dependent transferases"/>
    <property type="match status" value="1"/>
</dbReference>
<dbReference type="PROSITE" id="PS00600">
    <property type="entry name" value="AA_TRANSFER_CLASS_3"/>
    <property type="match status" value="1"/>
</dbReference>
<protein>
    <recommendedName>
        <fullName evidence="1">Glutamate-1-semialdehyde 2,1-aminomutase</fullName>
        <shortName evidence="1">GSA</shortName>
        <ecNumber evidence="1">5.4.3.8</ecNumber>
    </recommendedName>
    <alternativeName>
        <fullName evidence="1">Glutamate-1-semialdehyde aminotransferase</fullName>
        <shortName evidence="1">GSA-AT</shortName>
    </alternativeName>
</protein>
<comment type="catalytic activity">
    <reaction evidence="1">
        <text>(S)-4-amino-5-oxopentanoate = 5-aminolevulinate</text>
        <dbReference type="Rhea" id="RHEA:14265"/>
        <dbReference type="ChEBI" id="CHEBI:57501"/>
        <dbReference type="ChEBI" id="CHEBI:356416"/>
        <dbReference type="EC" id="5.4.3.8"/>
    </reaction>
</comment>
<comment type="cofactor">
    <cofactor evidence="1">
        <name>pyridoxal 5'-phosphate</name>
        <dbReference type="ChEBI" id="CHEBI:597326"/>
    </cofactor>
</comment>
<comment type="pathway">
    <text evidence="1">Porphyrin-containing compound metabolism; protoporphyrin-IX biosynthesis; 5-aminolevulinate from L-glutamyl-tRNA(Glu): step 2/2.</text>
</comment>
<comment type="subcellular location">
    <subcellularLocation>
        <location evidence="1">Cytoplasm</location>
    </subcellularLocation>
</comment>
<comment type="similarity">
    <text evidence="1">Belongs to the class-III pyridoxal-phosphate-dependent aminotransferase family. HemL subfamily.</text>
</comment>
<accession>C3MYE0</accession>